<protein>
    <recommendedName>
        <fullName evidence="1">Holliday junction branch migration complex subunit RuvA</fullName>
    </recommendedName>
</protein>
<sequence>MIGRLRGILAYKQPPWLVIDVGGVGYELEAPMSTFYDLPDVGRDVILFTHYAQKEDSVSLYGFLREGERRLFRDVQKVTGIGAKIALAVLSGVTVDEFARLITSGDITALTRIPGIGKKTAERMVVELRDRAADFSSGAPITGQLGPDAVSEATVALQQLGYKPAEAARMAREAGAEGDEVATVIRKALQAALR</sequence>
<name>RUVA_XANC8</name>
<keyword id="KW-0963">Cytoplasm</keyword>
<keyword id="KW-0227">DNA damage</keyword>
<keyword id="KW-0233">DNA recombination</keyword>
<keyword id="KW-0234">DNA repair</keyword>
<keyword id="KW-0238">DNA-binding</keyword>
<gene>
    <name evidence="1" type="primary">ruvA</name>
    <name type="ordered locus">XC_1133</name>
</gene>
<reference key="1">
    <citation type="journal article" date="2005" name="Genome Res.">
        <title>Comparative and functional genomic analyses of the pathogenicity of phytopathogen Xanthomonas campestris pv. campestris.</title>
        <authorList>
            <person name="Qian W."/>
            <person name="Jia Y."/>
            <person name="Ren S.-X."/>
            <person name="He Y.-Q."/>
            <person name="Feng J.-X."/>
            <person name="Lu L.-F."/>
            <person name="Sun Q."/>
            <person name="Ying G."/>
            <person name="Tang D.-J."/>
            <person name="Tang H."/>
            <person name="Wu W."/>
            <person name="Hao P."/>
            <person name="Wang L."/>
            <person name="Jiang B.-L."/>
            <person name="Zeng S."/>
            <person name="Gu W.-Y."/>
            <person name="Lu G."/>
            <person name="Rong L."/>
            <person name="Tian Y."/>
            <person name="Yao Z."/>
            <person name="Fu G."/>
            <person name="Chen B."/>
            <person name="Fang R."/>
            <person name="Qiang B."/>
            <person name="Chen Z."/>
            <person name="Zhao G.-P."/>
            <person name="Tang J.-L."/>
            <person name="He C."/>
        </authorList>
    </citation>
    <scope>NUCLEOTIDE SEQUENCE [LARGE SCALE GENOMIC DNA]</scope>
    <source>
        <strain>8004</strain>
    </source>
</reference>
<accession>Q4UXM0</accession>
<organism>
    <name type="scientific">Xanthomonas campestris pv. campestris (strain 8004)</name>
    <dbReference type="NCBI Taxonomy" id="314565"/>
    <lineage>
        <taxon>Bacteria</taxon>
        <taxon>Pseudomonadati</taxon>
        <taxon>Pseudomonadota</taxon>
        <taxon>Gammaproteobacteria</taxon>
        <taxon>Lysobacterales</taxon>
        <taxon>Lysobacteraceae</taxon>
        <taxon>Xanthomonas</taxon>
    </lineage>
</organism>
<proteinExistence type="inferred from homology"/>
<dbReference type="EMBL" id="CP000050">
    <property type="protein sequence ID" value="AAY48203.1"/>
    <property type="molecule type" value="Genomic_DNA"/>
</dbReference>
<dbReference type="RefSeq" id="WP_006450983.1">
    <property type="nucleotide sequence ID" value="NZ_CP155948.1"/>
</dbReference>
<dbReference type="SMR" id="Q4UXM0"/>
<dbReference type="GeneID" id="58012431"/>
<dbReference type="KEGG" id="xcb:XC_1133"/>
<dbReference type="HOGENOM" id="CLU_087936_0_0_6"/>
<dbReference type="Proteomes" id="UP000000420">
    <property type="component" value="Chromosome"/>
</dbReference>
<dbReference type="GO" id="GO:0005737">
    <property type="term" value="C:cytoplasm"/>
    <property type="evidence" value="ECO:0007669"/>
    <property type="project" value="UniProtKB-SubCell"/>
</dbReference>
<dbReference type="GO" id="GO:0009379">
    <property type="term" value="C:Holliday junction helicase complex"/>
    <property type="evidence" value="ECO:0007669"/>
    <property type="project" value="InterPro"/>
</dbReference>
<dbReference type="GO" id="GO:0048476">
    <property type="term" value="C:Holliday junction resolvase complex"/>
    <property type="evidence" value="ECO:0007669"/>
    <property type="project" value="UniProtKB-UniRule"/>
</dbReference>
<dbReference type="GO" id="GO:0005524">
    <property type="term" value="F:ATP binding"/>
    <property type="evidence" value="ECO:0007669"/>
    <property type="project" value="InterPro"/>
</dbReference>
<dbReference type="GO" id="GO:0000400">
    <property type="term" value="F:four-way junction DNA binding"/>
    <property type="evidence" value="ECO:0007669"/>
    <property type="project" value="UniProtKB-UniRule"/>
</dbReference>
<dbReference type="GO" id="GO:0009378">
    <property type="term" value="F:four-way junction helicase activity"/>
    <property type="evidence" value="ECO:0007669"/>
    <property type="project" value="InterPro"/>
</dbReference>
<dbReference type="GO" id="GO:0006310">
    <property type="term" value="P:DNA recombination"/>
    <property type="evidence" value="ECO:0007669"/>
    <property type="project" value="UniProtKB-UniRule"/>
</dbReference>
<dbReference type="GO" id="GO:0006281">
    <property type="term" value="P:DNA repair"/>
    <property type="evidence" value="ECO:0007669"/>
    <property type="project" value="UniProtKB-UniRule"/>
</dbReference>
<dbReference type="Gene3D" id="1.10.150.20">
    <property type="entry name" value="5' to 3' exonuclease, C-terminal subdomain"/>
    <property type="match status" value="1"/>
</dbReference>
<dbReference type="Gene3D" id="1.10.8.10">
    <property type="entry name" value="DNA helicase RuvA subunit, C-terminal domain"/>
    <property type="match status" value="1"/>
</dbReference>
<dbReference type="Gene3D" id="2.40.50.140">
    <property type="entry name" value="Nucleic acid-binding proteins"/>
    <property type="match status" value="1"/>
</dbReference>
<dbReference type="HAMAP" id="MF_00031">
    <property type="entry name" value="DNA_HJ_migration_RuvA"/>
    <property type="match status" value="1"/>
</dbReference>
<dbReference type="InterPro" id="IPR013849">
    <property type="entry name" value="DNA_helicase_Holl-junc_RuvA_I"/>
</dbReference>
<dbReference type="InterPro" id="IPR003583">
    <property type="entry name" value="Hlx-hairpin-Hlx_DNA-bd_motif"/>
</dbReference>
<dbReference type="InterPro" id="IPR012340">
    <property type="entry name" value="NA-bd_OB-fold"/>
</dbReference>
<dbReference type="InterPro" id="IPR000085">
    <property type="entry name" value="RuvA"/>
</dbReference>
<dbReference type="InterPro" id="IPR010994">
    <property type="entry name" value="RuvA_2-like"/>
</dbReference>
<dbReference type="InterPro" id="IPR011114">
    <property type="entry name" value="RuvA_C"/>
</dbReference>
<dbReference type="InterPro" id="IPR036267">
    <property type="entry name" value="RuvA_C_sf"/>
</dbReference>
<dbReference type="NCBIfam" id="TIGR00084">
    <property type="entry name" value="ruvA"/>
    <property type="match status" value="1"/>
</dbReference>
<dbReference type="Pfam" id="PF14520">
    <property type="entry name" value="HHH_5"/>
    <property type="match status" value="1"/>
</dbReference>
<dbReference type="Pfam" id="PF07499">
    <property type="entry name" value="RuvA_C"/>
    <property type="match status" value="1"/>
</dbReference>
<dbReference type="Pfam" id="PF01330">
    <property type="entry name" value="RuvA_N"/>
    <property type="match status" value="1"/>
</dbReference>
<dbReference type="SMART" id="SM00278">
    <property type="entry name" value="HhH1"/>
    <property type="match status" value="2"/>
</dbReference>
<dbReference type="SUPFAM" id="SSF46929">
    <property type="entry name" value="DNA helicase RuvA subunit, C-terminal domain"/>
    <property type="match status" value="1"/>
</dbReference>
<dbReference type="SUPFAM" id="SSF50249">
    <property type="entry name" value="Nucleic acid-binding proteins"/>
    <property type="match status" value="1"/>
</dbReference>
<dbReference type="SUPFAM" id="SSF47781">
    <property type="entry name" value="RuvA domain 2-like"/>
    <property type="match status" value="1"/>
</dbReference>
<comment type="function">
    <text evidence="1">The RuvA-RuvB-RuvC complex processes Holliday junction (HJ) DNA during genetic recombination and DNA repair, while the RuvA-RuvB complex plays an important role in the rescue of blocked DNA replication forks via replication fork reversal (RFR). RuvA specifically binds to HJ cruciform DNA, conferring on it an open structure. The RuvB hexamer acts as an ATP-dependent pump, pulling dsDNA into and through the RuvAB complex. HJ branch migration allows RuvC to scan DNA until it finds its consensus sequence, where it cleaves and resolves the cruciform DNA.</text>
</comment>
<comment type="subunit">
    <text evidence="1">Homotetramer. Forms an RuvA(8)-RuvB(12)-Holliday junction (HJ) complex. HJ DNA is sandwiched between 2 RuvA tetramers; dsDNA enters through RuvA and exits via RuvB. An RuvB hexamer assembles on each DNA strand where it exits the tetramer. Each RuvB hexamer is contacted by two RuvA subunits (via domain III) on 2 adjacent RuvB subunits; this complex drives branch migration. In the full resolvosome a probable DNA-RuvA(4)-RuvB(12)-RuvC(2) complex forms which resolves the HJ.</text>
</comment>
<comment type="subcellular location">
    <subcellularLocation>
        <location evidence="1">Cytoplasm</location>
    </subcellularLocation>
</comment>
<comment type="domain">
    <text evidence="1">Has three domains with a flexible linker between the domains II and III and assumes an 'L' shape. Domain III is highly mobile and contacts RuvB.</text>
</comment>
<comment type="similarity">
    <text evidence="1">Belongs to the RuvA family.</text>
</comment>
<feature type="chain" id="PRO_0000224922" description="Holliday junction branch migration complex subunit RuvA">
    <location>
        <begin position="1"/>
        <end position="194"/>
    </location>
</feature>
<feature type="region of interest" description="Domain I" evidence="1">
    <location>
        <begin position="1"/>
        <end position="64"/>
    </location>
</feature>
<feature type="region of interest" description="Domain II" evidence="1">
    <location>
        <begin position="65"/>
        <end position="140"/>
    </location>
</feature>
<feature type="region of interest" description="Flexible linker" evidence="1">
    <location>
        <begin position="140"/>
        <end position="144"/>
    </location>
</feature>
<feature type="region of interest" description="Domain III" evidence="1">
    <location>
        <begin position="145"/>
        <end position="194"/>
    </location>
</feature>
<evidence type="ECO:0000255" key="1">
    <source>
        <dbReference type="HAMAP-Rule" id="MF_00031"/>
    </source>
</evidence>